<keyword id="KW-0007">Acetylation</keyword>
<keyword id="KW-0032">Aminotransferase</keyword>
<keyword id="KW-0963">Cytoplasm</keyword>
<keyword id="KW-0597">Phosphoprotein</keyword>
<keyword id="KW-0663">Pyridoxal phosphate</keyword>
<keyword id="KW-1185">Reference proteome</keyword>
<keyword id="KW-0808">Transferase</keyword>
<reference key="1">
    <citation type="journal article" date="2004" name="Hepatology">
        <title>Murine alanine aminotransferase: cDNA cloning, functional expression, and differential gene regulation in mouse fatty liver.</title>
        <authorList>
            <person name="Jadhao S.B."/>
            <person name="Yang R.-Z."/>
            <person name="Lin Q."/>
            <person name="Hu H."/>
            <person name="Anania F.A."/>
            <person name="Shuldiner A.R."/>
            <person name="Gong D.-W."/>
        </authorList>
    </citation>
    <scope>NUCLEOTIDE SEQUENCE [MRNA]</scope>
    <scope>TISSUE SPECIFICITY</scope>
</reference>
<reference key="2">
    <citation type="journal article" date="2004" name="Hepatology">
        <authorList>
            <person name="Jadhao S.B."/>
            <person name="Yang R.-Z."/>
            <person name="Lin Q."/>
            <person name="Hu H."/>
            <person name="Anania F.A."/>
            <person name="Shuldiner A.R."/>
            <person name="Gong D.-W."/>
        </authorList>
    </citation>
    <scope>ERRATUM OF PUBMED:15122758</scope>
</reference>
<reference key="3">
    <citation type="journal article" date="2004" name="Genome Res.">
        <title>The status, quality, and expansion of the NIH full-length cDNA project: the Mammalian Gene Collection (MGC).</title>
        <authorList>
            <consortium name="The MGC Project Team"/>
        </authorList>
    </citation>
    <scope>NUCLEOTIDE SEQUENCE [LARGE SCALE MRNA]</scope>
    <source>
        <tissue>Liver</tissue>
    </source>
</reference>
<reference key="4">
    <citation type="journal article" date="2010" name="Cell">
        <title>A tissue-specific atlas of mouse protein phosphorylation and expression.</title>
        <authorList>
            <person name="Huttlin E.L."/>
            <person name="Jedrychowski M.P."/>
            <person name="Elias J.E."/>
            <person name="Goswami T."/>
            <person name="Rad R."/>
            <person name="Beausoleil S.A."/>
            <person name="Villen J."/>
            <person name="Haas W."/>
            <person name="Sowa M.E."/>
            <person name="Gygi S.P."/>
        </authorList>
    </citation>
    <scope>IDENTIFICATION BY MASS SPECTROMETRY [LARGE SCALE ANALYSIS]</scope>
    <source>
        <tissue>Brain</tissue>
        <tissue>Brown adipose tissue</tissue>
        <tissue>Heart</tissue>
        <tissue>Kidney</tissue>
        <tissue>Liver</tissue>
        <tissue>Lung</tissue>
        <tissue>Pancreas</tissue>
    </source>
</reference>
<dbReference type="EC" id="2.6.1.2"/>
<dbReference type="EMBL" id="BC022625">
    <property type="protein sequence ID" value="AAH22625.1"/>
    <property type="molecule type" value="mRNA"/>
</dbReference>
<dbReference type="EMBL" id="BC026846">
    <property type="protein sequence ID" value="AAH26846.1"/>
    <property type="molecule type" value="mRNA"/>
</dbReference>
<dbReference type="CCDS" id="CCDS27586.1"/>
<dbReference type="RefSeq" id="NP_877957.1">
    <property type="nucleotide sequence ID" value="NM_182805.3"/>
</dbReference>
<dbReference type="SMR" id="Q8QZR5"/>
<dbReference type="BioGRID" id="218060">
    <property type="interactions" value="1"/>
</dbReference>
<dbReference type="FunCoup" id="Q8QZR5">
    <property type="interactions" value="392"/>
</dbReference>
<dbReference type="STRING" id="10090.ENSMUSP00000023203"/>
<dbReference type="GlyGen" id="Q8QZR5">
    <property type="glycosylation" value="2 sites, 1 O-linked glycan (1 site)"/>
</dbReference>
<dbReference type="iPTMnet" id="Q8QZR5"/>
<dbReference type="PhosphoSitePlus" id="Q8QZR5"/>
<dbReference type="SwissPalm" id="Q8QZR5"/>
<dbReference type="jPOST" id="Q8QZR5"/>
<dbReference type="PaxDb" id="10090-ENSMUSP00000023203"/>
<dbReference type="ProteomicsDB" id="282072"/>
<dbReference type="Antibodypedia" id="14920">
    <property type="antibodies" value="405 antibodies from 31 providers"/>
</dbReference>
<dbReference type="DNASU" id="76282"/>
<dbReference type="Ensembl" id="ENSMUST00000023203.6">
    <property type="protein sequence ID" value="ENSMUSP00000023203.5"/>
    <property type="gene ID" value="ENSMUSG00000022546.6"/>
</dbReference>
<dbReference type="Ensembl" id="ENSMUST00000229679.2">
    <property type="protein sequence ID" value="ENSMUSP00000155553.2"/>
    <property type="gene ID" value="ENSMUSG00000022546.6"/>
</dbReference>
<dbReference type="GeneID" id="76282"/>
<dbReference type="KEGG" id="mmu:76282"/>
<dbReference type="UCSC" id="uc007wls.1">
    <property type="organism name" value="mouse"/>
</dbReference>
<dbReference type="AGR" id="MGI:95802"/>
<dbReference type="CTD" id="2875"/>
<dbReference type="MGI" id="MGI:95802">
    <property type="gene designation" value="Gpt"/>
</dbReference>
<dbReference type="VEuPathDB" id="HostDB:ENSMUSG00000022546"/>
<dbReference type="eggNOG" id="KOG0258">
    <property type="taxonomic scope" value="Eukaryota"/>
</dbReference>
<dbReference type="GeneTree" id="ENSGT00940000155265"/>
<dbReference type="HOGENOM" id="CLU_014254_3_1_1"/>
<dbReference type="InParanoid" id="Q8QZR5"/>
<dbReference type="OMA" id="AYMARTM"/>
<dbReference type="OrthoDB" id="1732682at2759"/>
<dbReference type="PhylomeDB" id="Q8QZR5"/>
<dbReference type="TreeFam" id="TF300839"/>
<dbReference type="BRENDA" id="2.6.1.2">
    <property type="organism ID" value="3474"/>
</dbReference>
<dbReference type="Reactome" id="R-MMU-70268">
    <property type="pathway name" value="Pyruvate metabolism"/>
</dbReference>
<dbReference type="Reactome" id="R-MMU-8964540">
    <property type="pathway name" value="Alanine metabolism"/>
</dbReference>
<dbReference type="UniPathway" id="UPA00528">
    <property type="reaction ID" value="UER00586"/>
</dbReference>
<dbReference type="BioGRID-ORCS" id="76282">
    <property type="hits" value="1 hit in 61 CRISPR screens"/>
</dbReference>
<dbReference type="PRO" id="PR:Q8QZR5"/>
<dbReference type="Proteomes" id="UP000000589">
    <property type="component" value="Chromosome 15"/>
</dbReference>
<dbReference type="RNAct" id="Q8QZR5">
    <property type="molecule type" value="protein"/>
</dbReference>
<dbReference type="Bgee" id="ENSMUSG00000022546">
    <property type="expression patterns" value="Expressed in left lobe of liver and 215 other cell types or tissues"/>
</dbReference>
<dbReference type="ExpressionAtlas" id="Q8QZR5">
    <property type="expression patterns" value="baseline and differential"/>
</dbReference>
<dbReference type="GO" id="GO:0005737">
    <property type="term" value="C:cytoplasm"/>
    <property type="evidence" value="ECO:0007669"/>
    <property type="project" value="UniProtKB-SubCell"/>
</dbReference>
<dbReference type="GO" id="GO:0005615">
    <property type="term" value="C:extracellular space"/>
    <property type="evidence" value="ECO:0000314"/>
    <property type="project" value="MGI"/>
</dbReference>
<dbReference type="GO" id="GO:0004021">
    <property type="term" value="F:L-alanine:2-oxoglutarate aminotransferase activity"/>
    <property type="evidence" value="ECO:0007669"/>
    <property type="project" value="UniProtKB-EC"/>
</dbReference>
<dbReference type="GO" id="GO:0030170">
    <property type="term" value="F:pyridoxal phosphate binding"/>
    <property type="evidence" value="ECO:0007669"/>
    <property type="project" value="InterPro"/>
</dbReference>
<dbReference type="GO" id="GO:0009058">
    <property type="term" value="P:biosynthetic process"/>
    <property type="evidence" value="ECO:0007669"/>
    <property type="project" value="InterPro"/>
</dbReference>
<dbReference type="GO" id="GO:0042853">
    <property type="term" value="P:L-alanine catabolic process"/>
    <property type="evidence" value="ECO:0007669"/>
    <property type="project" value="UniProtKB-UniPathway"/>
</dbReference>
<dbReference type="CDD" id="cd00609">
    <property type="entry name" value="AAT_like"/>
    <property type="match status" value="1"/>
</dbReference>
<dbReference type="FunFam" id="1.10.287.1970:FF:000001">
    <property type="entry name" value="Alanine aminotransferase 2"/>
    <property type="match status" value="1"/>
</dbReference>
<dbReference type="FunFam" id="3.40.640.10:FF:000236">
    <property type="entry name" value="Alanine aminotransferase 2"/>
    <property type="match status" value="1"/>
</dbReference>
<dbReference type="FunFam" id="3.90.1150.10:FF:000010">
    <property type="entry name" value="Alanine aminotransferase 2"/>
    <property type="match status" value="1"/>
</dbReference>
<dbReference type="Gene3D" id="1.10.287.1970">
    <property type="match status" value="1"/>
</dbReference>
<dbReference type="Gene3D" id="3.90.1150.10">
    <property type="entry name" value="Aspartate Aminotransferase, domain 1"/>
    <property type="match status" value="1"/>
</dbReference>
<dbReference type="Gene3D" id="3.40.640.10">
    <property type="entry name" value="Type I PLP-dependent aspartate aminotransferase-like (Major domain)"/>
    <property type="match status" value="1"/>
</dbReference>
<dbReference type="InterPro" id="IPR045088">
    <property type="entry name" value="ALAT1/2-like"/>
</dbReference>
<dbReference type="InterPro" id="IPR004839">
    <property type="entry name" value="Aminotransferase_I/II_large"/>
</dbReference>
<dbReference type="InterPro" id="IPR015424">
    <property type="entry name" value="PyrdxlP-dep_Trfase"/>
</dbReference>
<dbReference type="InterPro" id="IPR015421">
    <property type="entry name" value="PyrdxlP-dep_Trfase_major"/>
</dbReference>
<dbReference type="InterPro" id="IPR015422">
    <property type="entry name" value="PyrdxlP-dep_Trfase_small"/>
</dbReference>
<dbReference type="PANTHER" id="PTHR11751">
    <property type="entry name" value="ALANINE AMINOTRANSFERASE"/>
    <property type="match status" value="1"/>
</dbReference>
<dbReference type="PANTHER" id="PTHR11751:SF308">
    <property type="entry name" value="ALANINE AMINOTRANSFERASE 1"/>
    <property type="match status" value="1"/>
</dbReference>
<dbReference type="Pfam" id="PF00155">
    <property type="entry name" value="Aminotran_1_2"/>
    <property type="match status" value="1"/>
</dbReference>
<dbReference type="SUPFAM" id="SSF53383">
    <property type="entry name" value="PLP-dependent transferases"/>
    <property type="match status" value="1"/>
</dbReference>
<proteinExistence type="evidence at protein level"/>
<evidence type="ECO:0000250" key="1"/>
<evidence type="ECO:0000250" key="2">
    <source>
        <dbReference type="UniProtKB" id="P24298"/>
    </source>
</evidence>
<evidence type="ECO:0000269" key="3">
    <source>
    </source>
</evidence>
<evidence type="ECO:0000305" key="4"/>
<sequence length="496" mass="55143">MASQRNDRIQASRNGLKGKVLTLDTMNPCVRRVEYAVRGPIVQRALELEQELRQGVKKPFTEVIRANIGDAQAMGQRPITFFRQVLALCVYPNLLSSPDFPEDAKRRAERILQACGGHSLGAYSISSGIQPIREDVAQYIERRDGGIPADPNNIFLSTGASDAIVTMLKLLVAGEGRARTGVLIPIPQYPLYSAALAELDAVQVDYYLDEERAWALDIAELRRALCQARDRCCPRVLCVINPGNPTGQVQTRECIEAVIRFAFEEGLFLMADEVYQDNVYAEGSQFHSFKKVLTEMGPPYATQQELASFHSVSKGYMGECGFRGGYVEVVNMDAEVQKQMAKLMSVRLCPPVPGQALMGMVVSPPTPSEPSFKQFQAERQEVLAELAAKAKLTEQVFNEAPGIRCNPVQGAMYSFPQIQLPLKAVQRAQDLGLAPDMFFCLCLLEETGICVVPGSGFGQQEGTYHFRMTILPPMEKLRVLLEKLRHFHAKFTHEYS</sequence>
<comment type="function">
    <text evidence="1">Catalyzes the reversible transamination between alanine and 2-oxoglutarate to form pyruvate and glutamate. Participates in cellular nitrogen metabolism and also in liver gluconeogenesis starting with precursors transported from skeletal muscles (By similarity).</text>
</comment>
<comment type="catalytic activity">
    <reaction>
        <text>L-alanine + 2-oxoglutarate = pyruvate + L-glutamate</text>
        <dbReference type="Rhea" id="RHEA:19453"/>
        <dbReference type="ChEBI" id="CHEBI:15361"/>
        <dbReference type="ChEBI" id="CHEBI:16810"/>
        <dbReference type="ChEBI" id="CHEBI:29985"/>
        <dbReference type="ChEBI" id="CHEBI:57972"/>
        <dbReference type="EC" id="2.6.1.2"/>
    </reaction>
</comment>
<comment type="cofactor">
    <cofactor evidence="1">
        <name>pyridoxal 5'-phosphate</name>
        <dbReference type="ChEBI" id="CHEBI:597326"/>
    </cofactor>
</comment>
<comment type="pathway">
    <text>Amino-acid degradation; L-alanine degradation via transaminase pathway; pyruvate from L-alanine: step 1/1.</text>
</comment>
<comment type="subunit">
    <text evidence="1">Homodimer.</text>
</comment>
<comment type="subcellular location">
    <subcellularLocation>
        <location evidence="1">Cytoplasm</location>
    </subcellularLocation>
</comment>
<comment type="tissue specificity">
    <text evidence="3">Mainly expressed in liver, intestine, colon and white adipose tissue.</text>
</comment>
<comment type="similarity">
    <text evidence="4">Belongs to the class-I pyridoxal-phosphate-dependent aminotransferase family. Alanine aminotransferase subfamily.</text>
</comment>
<organism>
    <name type="scientific">Mus musculus</name>
    <name type="common">Mouse</name>
    <dbReference type="NCBI Taxonomy" id="10090"/>
    <lineage>
        <taxon>Eukaryota</taxon>
        <taxon>Metazoa</taxon>
        <taxon>Chordata</taxon>
        <taxon>Craniata</taxon>
        <taxon>Vertebrata</taxon>
        <taxon>Euteleostomi</taxon>
        <taxon>Mammalia</taxon>
        <taxon>Eutheria</taxon>
        <taxon>Euarchontoglires</taxon>
        <taxon>Glires</taxon>
        <taxon>Rodentia</taxon>
        <taxon>Myomorpha</taxon>
        <taxon>Muroidea</taxon>
        <taxon>Muridae</taxon>
        <taxon>Murinae</taxon>
        <taxon>Mus</taxon>
        <taxon>Mus</taxon>
    </lineage>
</organism>
<gene>
    <name type="primary">Gpt</name>
    <name type="synonym">Gpt1</name>
</gene>
<feature type="initiator methionine" description="Removed" evidence="2">
    <location>
        <position position="1"/>
    </location>
</feature>
<feature type="chain" id="PRO_0000123934" description="Alanine aminotransferase 1">
    <location>
        <begin position="2"/>
        <end position="496"/>
    </location>
</feature>
<feature type="modified residue" description="N-acetylalanine" evidence="2">
    <location>
        <position position="2"/>
    </location>
</feature>
<feature type="modified residue" description="Phosphothreonine" evidence="2">
    <location>
        <position position="22"/>
    </location>
</feature>
<feature type="modified residue" description="N6-(pyridoxal phosphate)lysine" evidence="1">
    <location>
        <position position="314"/>
    </location>
</feature>
<accession>Q8QZR5</accession>
<name>ALAT1_MOUSE</name>
<protein>
    <recommendedName>
        <fullName>Alanine aminotransferase 1</fullName>
        <shortName>ALT1</shortName>
        <ecNumber>2.6.1.2</ecNumber>
    </recommendedName>
    <alternativeName>
        <fullName>Glutamate pyruvate transaminase 1</fullName>
        <shortName>GPT 1</shortName>
    </alternativeName>
    <alternativeName>
        <fullName>Glutamic--alanine transaminase 1</fullName>
    </alternativeName>
    <alternativeName>
        <fullName>Glutamic--pyruvic transaminase 1</fullName>
    </alternativeName>
</protein>